<dbReference type="EC" id="2.4.1.182" evidence="1"/>
<dbReference type="EMBL" id="CP001113">
    <property type="protein sequence ID" value="ACF62083.1"/>
    <property type="molecule type" value="Genomic_DNA"/>
</dbReference>
<dbReference type="RefSeq" id="WP_000741216.1">
    <property type="nucleotide sequence ID" value="NZ_CCMR01000003.1"/>
</dbReference>
<dbReference type="SMR" id="B4SV11"/>
<dbReference type="CAZy" id="GT19">
    <property type="family name" value="Glycosyltransferase Family 19"/>
</dbReference>
<dbReference type="KEGG" id="see:SNSL254_A0251"/>
<dbReference type="HOGENOM" id="CLU_036577_3_0_6"/>
<dbReference type="UniPathway" id="UPA00359">
    <property type="reaction ID" value="UER00481"/>
</dbReference>
<dbReference type="Proteomes" id="UP000008824">
    <property type="component" value="Chromosome"/>
</dbReference>
<dbReference type="GO" id="GO:0016020">
    <property type="term" value="C:membrane"/>
    <property type="evidence" value="ECO:0007669"/>
    <property type="project" value="GOC"/>
</dbReference>
<dbReference type="GO" id="GO:0008915">
    <property type="term" value="F:lipid-A-disaccharide synthase activity"/>
    <property type="evidence" value="ECO:0007669"/>
    <property type="project" value="UniProtKB-UniRule"/>
</dbReference>
<dbReference type="GO" id="GO:0005543">
    <property type="term" value="F:phospholipid binding"/>
    <property type="evidence" value="ECO:0007669"/>
    <property type="project" value="TreeGrafter"/>
</dbReference>
<dbReference type="GO" id="GO:0009245">
    <property type="term" value="P:lipid A biosynthetic process"/>
    <property type="evidence" value="ECO:0007669"/>
    <property type="project" value="UniProtKB-UniRule"/>
</dbReference>
<dbReference type="CDD" id="cd01635">
    <property type="entry name" value="Glycosyltransferase_GTB-type"/>
    <property type="match status" value="1"/>
</dbReference>
<dbReference type="HAMAP" id="MF_00392">
    <property type="entry name" value="LpxB"/>
    <property type="match status" value="1"/>
</dbReference>
<dbReference type="InterPro" id="IPR003835">
    <property type="entry name" value="Glyco_trans_19"/>
</dbReference>
<dbReference type="NCBIfam" id="TIGR00215">
    <property type="entry name" value="lpxB"/>
    <property type="match status" value="1"/>
</dbReference>
<dbReference type="PANTHER" id="PTHR30372">
    <property type="entry name" value="LIPID-A-DISACCHARIDE SYNTHASE"/>
    <property type="match status" value="1"/>
</dbReference>
<dbReference type="PANTHER" id="PTHR30372:SF4">
    <property type="entry name" value="LIPID-A-DISACCHARIDE SYNTHASE, MITOCHONDRIAL-RELATED"/>
    <property type="match status" value="1"/>
</dbReference>
<dbReference type="Pfam" id="PF02684">
    <property type="entry name" value="LpxB"/>
    <property type="match status" value="1"/>
</dbReference>
<dbReference type="SUPFAM" id="SSF53756">
    <property type="entry name" value="UDP-Glycosyltransferase/glycogen phosphorylase"/>
    <property type="match status" value="1"/>
</dbReference>
<accession>B4SV11</accession>
<evidence type="ECO:0000255" key="1">
    <source>
        <dbReference type="HAMAP-Rule" id="MF_00392"/>
    </source>
</evidence>
<reference key="1">
    <citation type="journal article" date="2011" name="J. Bacteriol.">
        <title>Comparative genomics of 28 Salmonella enterica isolates: evidence for CRISPR-mediated adaptive sublineage evolution.</title>
        <authorList>
            <person name="Fricke W.F."/>
            <person name="Mammel M.K."/>
            <person name="McDermott P.F."/>
            <person name="Tartera C."/>
            <person name="White D.G."/>
            <person name="Leclerc J.E."/>
            <person name="Ravel J."/>
            <person name="Cebula T.A."/>
        </authorList>
    </citation>
    <scope>NUCLEOTIDE SEQUENCE [LARGE SCALE GENOMIC DNA]</scope>
    <source>
        <strain>SL254</strain>
    </source>
</reference>
<protein>
    <recommendedName>
        <fullName evidence="1">Lipid-A-disaccharide synthase</fullName>
        <ecNumber evidence="1">2.4.1.182</ecNumber>
    </recommendedName>
</protein>
<gene>
    <name evidence="1" type="primary">lpxB</name>
    <name type="ordered locus">SNSL254_A0251</name>
</gene>
<name>LPXB_SALNS</name>
<keyword id="KW-0328">Glycosyltransferase</keyword>
<keyword id="KW-0441">Lipid A biosynthesis</keyword>
<keyword id="KW-0444">Lipid biosynthesis</keyword>
<keyword id="KW-0443">Lipid metabolism</keyword>
<keyword id="KW-0808">Transferase</keyword>
<feature type="chain" id="PRO_1000123062" description="Lipid-A-disaccharide synthase">
    <location>
        <begin position="1"/>
        <end position="382"/>
    </location>
</feature>
<proteinExistence type="inferred from homology"/>
<comment type="function">
    <text evidence="1">Condensation of UDP-2,3-diacylglucosamine and 2,3-diacylglucosamine-1-phosphate to form lipid A disaccharide, a precursor of lipid A, a phosphorylated glycolipid that anchors the lipopolysaccharide to the outer membrane of the cell.</text>
</comment>
<comment type="catalytic activity">
    <reaction evidence="1">
        <text>2-N,3-O-bis[(3R)-3-hydroxytetradecanoyl]-alpha-D-glucosaminyl 1-phosphate + UDP-2-N,3-O-bis[(3R)-3-hydroxytetradecanoyl]-alpha-D-glucosamine = lipid A disaccharide (E. coli) + UDP + H(+)</text>
        <dbReference type="Rhea" id="RHEA:22668"/>
        <dbReference type="ChEBI" id="CHEBI:15378"/>
        <dbReference type="ChEBI" id="CHEBI:57957"/>
        <dbReference type="ChEBI" id="CHEBI:58223"/>
        <dbReference type="ChEBI" id="CHEBI:58466"/>
        <dbReference type="ChEBI" id="CHEBI:78847"/>
    </reaction>
</comment>
<comment type="catalytic activity">
    <reaction evidence="1">
        <text>a lipid X + a UDP-2-N,3-O-bis[(3R)-3-hydroxyacyl]-alpha-D-glucosamine = a lipid A disaccharide + UDP + H(+)</text>
        <dbReference type="Rhea" id="RHEA:67828"/>
        <dbReference type="ChEBI" id="CHEBI:15378"/>
        <dbReference type="ChEBI" id="CHEBI:58223"/>
        <dbReference type="ChEBI" id="CHEBI:137748"/>
        <dbReference type="ChEBI" id="CHEBI:176338"/>
        <dbReference type="ChEBI" id="CHEBI:176343"/>
        <dbReference type="EC" id="2.4.1.182"/>
    </reaction>
</comment>
<comment type="pathway">
    <text evidence="1">Glycolipid biosynthesis; lipid IV(A) biosynthesis; lipid IV(A) from (3R)-3-hydroxytetradecanoyl-[acyl-carrier-protein] and UDP-N-acetyl-alpha-D-glucosamine: step 5/6.</text>
</comment>
<comment type="similarity">
    <text evidence="1">Belongs to the LpxB family.</text>
</comment>
<organism>
    <name type="scientific">Salmonella newport (strain SL254)</name>
    <dbReference type="NCBI Taxonomy" id="423368"/>
    <lineage>
        <taxon>Bacteria</taxon>
        <taxon>Pseudomonadati</taxon>
        <taxon>Pseudomonadota</taxon>
        <taxon>Gammaproteobacteria</taxon>
        <taxon>Enterobacterales</taxon>
        <taxon>Enterobacteriaceae</taxon>
        <taxon>Salmonella</taxon>
    </lineage>
</organism>
<sequence>MAAQRPLTIALVAGETSGDILGAGLIRALKARVPNARFVGVAGPRMQAEGCEAWYEMEELAVMGIVEVLGRLRRLLHIRADLTRRFTELKPDVFVGIDAPDFNITLEGNLKKQGIKTIHYVSPSVWAWRQKRVFKIGRSTHMVLAFLPFEKAFYDKFNVPCRFIGHTMADAMPLDPDKNAARDVLGIPHDAHCLALLPGSRGAEVEMLSADFLKTAQLLRQRYPDLEVVVPLVNAKRREQFEKIKAEVAPDLAVHLLDGMAREAMIASDAALLASGTAALECMLAKCPMVVGYRMKPFTFWLAKRLVKTEYVSLPNLLAGRELVKELLQEECEPQKLAEALLPLLANGKTSHAMHDTFRELHQQIRCNADEQAADAVLELAQ</sequence>